<keyword id="KW-0002">3D-structure</keyword>
<keyword id="KW-0015">Albinism</keyword>
<keyword id="KW-0025">Alternative splicing</keyword>
<keyword id="KW-0186">Copper</keyword>
<keyword id="KW-0209">Deafness</keyword>
<keyword id="KW-0225">Disease variant</keyword>
<keyword id="KW-0325">Glycoprotein</keyword>
<keyword id="KW-0470">Melanin biosynthesis</keyword>
<keyword id="KW-0472">Membrane</keyword>
<keyword id="KW-0479">Metal-binding</keyword>
<keyword id="KW-0503">Monooxygenase</keyword>
<keyword id="KW-0560">Oxidoreductase</keyword>
<keyword id="KW-1267">Proteomics identification</keyword>
<keyword id="KW-1185">Reference proteome</keyword>
<keyword id="KW-0732">Signal</keyword>
<keyword id="KW-0812">Transmembrane</keyword>
<keyword id="KW-1133">Transmembrane helix</keyword>
<keyword id="KW-0825">Tumor antigen</keyword>
<keyword id="KW-0897">Waardenburg syndrome</keyword>
<evidence type="ECO:0000250" key="1">
    <source>
        <dbReference type="UniProtKB" id="P11344"/>
    </source>
</evidence>
<evidence type="ECO:0000250" key="2">
    <source>
        <dbReference type="UniProtKB" id="Q9ZP19"/>
    </source>
</evidence>
<evidence type="ECO:0000255" key="3"/>
<evidence type="ECO:0000256" key="4">
    <source>
        <dbReference type="SAM" id="MobiDB-lite"/>
    </source>
</evidence>
<evidence type="ECO:0000269" key="5">
    <source>
    </source>
</evidence>
<evidence type="ECO:0000269" key="6">
    <source>
    </source>
</evidence>
<evidence type="ECO:0000269" key="7">
    <source>
    </source>
</evidence>
<evidence type="ECO:0000269" key="8">
    <source>
    </source>
</evidence>
<evidence type="ECO:0000269" key="9">
    <source>
    </source>
</evidence>
<evidence type="ECO:0000269" key="10">
    <source>
    </source>
</evidence>
<evidence type="ECO:0000269" key="11">
    <source>
    </source>
</evidence>
<evidence type="ECO:0000269" key="12">
    <source>
    </source>
</evidence>
<evidence type="ECO:0000269" key="13">
    <source>
    </source>
</evidence>
<evidence type="ECO:0000269" key="14">
    <source>
    </source>
</evidence>
<evidence type="ECO:0000269" key="15">
    <source>
    </source>
</evidence>
<evidence type="ECO:0000269" key="16">
    <source>
    </source>
</evidence>
<evidence type="ECO:0000269" key="17">
    <source>
    </source>
</evidence>
<evidence type="ECO:0000269" key="18">
    <source>
    </source>
</evidence>
<evidence type="ECO:0000269" key="19">
    <source>
    </source>
</evidence>
<evidence type="ECO:0000269" key="20">
    <source>
    </source>
</evidence>
<evidence type="ECO:0000269" key="21">
    <source>
    </source>
</evidence>
<evidence type="ECO:0000269" key="22">
    <source>
    </source>
</evidence>
<evidence type="ECO:0000269" key="23">
    <source>
    </source>
</evidence>
<evidence type="ECO:0000269" key="24">
    <source>
    </source>
</evidence>
<evidence type="ECO:0000269" key="25">
    <source>
    </source>
</evidence>
<evidence type="ECO:0000269" key="26">
    <source>
    </source>
</evidence>
<evidence type="ECO:0000269" key="27">
    <source>
    </source>
</evidence>
<evidence type="ECO:0000269" key="28">
    <source>
    </source>
</evidence>
<evidence type="ECO:0000269" key="29">
    <source>
    </source>
</evidence>
<evidence type="ECO:0000269" key="30">
    <source>
    </source>
</evidence>
<evidence type="ECO:0000269" key="31">
    <source>
    </source>
</evidence>
<evidence type="ECO:0000269" key="32">
    <source>
    </source>
</evidence>
<evidence type="ECO:0000269" key="33">
    <source>
    </source>
</evidence>
<evidence type="ECO:0000269" key="34">
    <source>
    </source>
</evidence>
<evidence type="ECO:0000269" key="35">
    <source>
    </source>
</evidence>
<evidence type="ECO:0000269" key="36">
    <source>
    </source>
</evidence>
<evidence type="ECO:0000269" key="37">
    <source>
    </source>
</evidence>
<evidence type="ECO:0000303" key="38">
    <source>
    </source>
</evidence>
<evidence type="ECO:0000305" key="39"/>
<evidence type="ECO:0000305" key="40">
    <source>
    </source>
</evidence>
<evidence type="ECO:0000312" key="41">
    <source>
        <dbReference type="HGNC" id="HGNC:12442"/>
    </source>
</evidence>
<gene>
    <name evidence="41" type="primary">TYR</name>
</gene>
<protein>
    <recommendedName>
        <fullName evidence="39">Tyrosinase</fullName>
        <ecNumber evidence="28">1.14.18.1</ecNumber>
    </recommendedName>
    <alternativeName>
        <fullName>LB24-AB</fullName>
    </alternativeName>
    <alternativeName>
        <fullName>Monophenol monooxygenase</fullName>
    </alternativeName>
    <alternativeName>
        <fullName>SK29-AB</fullName>
    </alternativeName>
    <alternativeName>
        <fullName>Tumor rejection antigen AB</fullName>
    </alternativeName>
</protein>
<organism>
    <name type="scientific">Homo sapiens</name>
    <name type="common">Human</name>
    <dbReference type="NCBI Taxonomy" id="9606"/>
    <lineage>
        <taxon>Eukaryota</taxon>
        <taxon>Metazoa</taxon>
        <taxon>Chordata</taxon>
        <taxon>Craniata</taxon>
        <taxon>Vertebrata</taxon>
        <taxon>Euteleostomi</taxon>
        <taxon>Mammalia</taxon>
        <taxon>Eutheria</taxon>
        <taxon>Euarchontoglires</taxon>
        <taxon>Primates</taxon>
        <taxon>Haplorrhini</taxon>
        <taxon>Catarrhini</taxon>
        <taxon>Hominidae</taxon>
        <taxon>Homo</taxon>
    </lineage>
</organism>
<proteinExistence type="evidence at protein level"/>
<dbReference type="EC" id="1.14.18.1" evidence="28"/>
<dbReference type="EMBL" id="M27160">
    <property type="protein sequence ID" value="AAB37227.1"/>
    <property type="molecule type" value="mRNA"/>
</dbReference>
<dbReference type="EMBL" id="M63239">
    <property type="protein sequence ID" value="AAA61242.1"/>
    <property type="molecule type" value="Genomic_DNA"/>
</dbReference>
<dbReference type="EMBL" id="M63235">
    <property type="protein sequence ID" value="AAA61242.1"/>
    <property type="status" value="JOINED"/>
    <property type="molecule type" value="Genomic_DNA"/>
</dbReference>
<dbReference type="EMBL" id="M63236">
    <property type="protein sequence ID" value="AAA61242.1"/>
    <property type="status" value="JOINED"/>
    <property type="molecule type" value="Genomic_DNA"/>
</dbReference>
<dbReference type="EMBL" id="M63237">
    <property type="protein sequence ID" value="AAA61242.1"/>
    <property type="status" value="JOINED"/>
    <property type="molecule type" value="Genomic_DNA"/>
</dbReference>
<dbReference type="EMBL" id="M63238">
    <property type="protein sequence ID" value="AAA61242.1"/>
    <property type="status" value="JOINED"/>
    <property type="molecule type" value="Genomic_DNA"/>
</dbReference>
<dbReference type="EMBL" id="J03581">
    <property type="protein sequence ID" value="AAA61241.1"/>
    <property type="status" value="ALT_INIT"/>
    <property type="molecule type" value="mRNA"/>
</dbReference>
<dbReference type="EMBL" id="Y00819">
    <property type="protein sequence ID" value="CAA68756.1"/>
    <property type="status" value="ALT_INIT"/>
    <property type="molecule type" value="mRNA"/>
</dbReference>
<dbReference type="EMBL" id="U01873">
    <property type="protein sequence ID" value="AAB60319.1"/>
    <property type="status" value="ALT_SEQ"/>
    <property type="molecule type" value="mRNA"/>
</dbReference>
<dbReference type="EMBL" id="M74314">
    <property type="protein sequence ID" value="AAA61244.1"/>
    <property type="molecule type" value="mRNA"/>
</dbReference>
<dbReference type="EMBL" id="X16073">
    <property type="protein sequence ID" value="CAA34205.1"/>
    <property type="molecule type" value="Genomic_DNA"/>
</dbReference>
<dbReference type="EMBL" id="AF237811">
    <property type="protein sequence ID" value="AAK00805.1"/>
    <property type="molecule type" value="Genomic_DNA"/>
</dbReference>
<dbReference type="EMBL" id="AF237807">
    <property type="protein sequence ID" value="AAK00805.1"/>
    <property type="status" value="JOINED"/>
    <property type="molecule type" value="Genomic_DNA"/>
</dbReference>
<dbReference type="EMBL" id="AF237808">
    <property type="protein sequence ID" value="AAK00805.1"/>
    <property type="status" value="JOINED"/>
    <property type="molecule type" value="Genomic_DNA"/>
</dbReference>
<dbReference type="EMBL" id="AF237809">
    <property type="protein sequence ID" value="AAK00805.1"/>
    <property type="status" value="JOINED"/>
    <property type="molecule type" value="Genomic_DNA"/>
</dbReference>
<dbReference type="EMBL" id="AF237810">
    <property type="protein sequence ID" value="AAK00805.1"/>
    <property type="status" value="JOINED"/>
    <property type="molecule type" value="Genomic_DNA"/>
</dbReference>
<dbReference type="EMBL" id="BC027179">
    <property type="protein sequence ID" value="AAH27179.1"/>
    <property type="molecule type" value="mRNA"/>
</dbReference>
<dbReference type="EMBL" id="AY012019">
    <property type="protein sequence ID" value="AAG38762.1"/>
    <property type="molecule type" value="Genomic_DNA"/>
</dbReference>
<dbReference type="CCDS" id="CCDS8284.1">
    <molecule id="P14679-1"/>
</dbReference>
<dbReference type="PIR" id="A38444">
    <property type="entry name" value="YRHU1"/>
</dbReference>
<dbReference type="RefSeq" id="NP_000363.1">
    <molecule id="P14679-1"/>
    <property type="nucleotide sequence ID" value="NM_000372.5"/>
</dbReference>
<dbReference type="PDB" id="7RK7">
    <property type="method" value="X-ray"/>
    <property type="resolution" value="2.54 A"/>
    <property type="chains" value="C=369-377"/>
</dbReference>
<dbReference type="PDBsum" id="7RK7"/>
<dbReference type="SMR" id="P14679"/>
<dbReference type="BioGRID" id="113150">
    <property type="interactions" value="5"/>
</dbReference>
<dbReference type="CORUM" id="P14679"/>
<dbReference type="FunCoup" id="P14679">
    <property type="interactions" value="145"/>
</dbReference>
<dbReference type="IntAct" id="P14679">
    <property type="interactions" value="5"/>
</dbReference>
<dbReference type="STRING" id="9606.ENSP00000263321"/>
<dbReference type="BindingDB" id="P14679"/>
<dbReference type="ChEMBL" id="CHEMBL1973"/>
<dbReference type="DrugBank" id="DB11217">
    <property type="generic name" value="Arbutin"/>
</dbReference>
<dbReference type="DrugBank" id="DB00548">
    <property type="generic name" value="Azelaic acid"/>
</dbReference>
<dbReference type="DrugBank" id="DB09130">
    <property type="generic name" value="Copper"/>
</dbReference>
<dbReference type="DrugBank" id="DB11254">
    <property type="generic name" value="Hexylresorcinol"/>
</dbReference>
<dbReference type="DrugBank" id="DB09526">
    <property type="generic name" value="Hydroquinone"/>
</dbReference>
<dbReference type="DrugBank" id="DB01759">
    <property type="generic name" value="Kojic acid"/>
</dbReference>
<dbReference type="DrugBank" id="DB01055">
    <property type="generic name" value="Mimosine"/>
</dbReference>
<dbReference type="DrugBank" id="DB00600">
    <property type="generic name" value="Monobenzone"/>
</dbReference>
<dbReference type="DrugBank" id="DB08754">
    <property type="generic name" value="N-Caffeoyltyramine"/>
</dbReference>
<dbReference type="DrugBank" id="DB03694">
    <property type="generic name" value="N-phenylthiourea"/>
</dbReference>
<dbReference type="DrugBank" id="DB00157">
    <property type="generic name" value="NADH"/>
</dbReference>
<dbReference type="DrugBank" id="DB16865">
    <property type="generic name" value="Rosmarinic acid"/>
</dbReference>
<dbReference type="DrugCentral" id="P14679"/>
<dbReference type="GuidetoPHARMACOLOGY" id="2643"/>
<dbReference type="TCDB" id="9.B.423.1.1">
    <property type="family name" value="the tysrosinase (tyr) family"/>
</dbReference>
<dbReference type="GlyCosmos" id="P14679">
    <property type="glycosylation" value="6 sites, No reported glycans"/>
</dbReference>
<dbReference type="GlyGen" id="P14679">
    <property type="glycosylation" value="9 sites"/>
</dbReference>
<dbReference type="iPTMnet" id="P14679"/>
<dbReference type="PhosphoSitePlus" id="P14679"/>
<dbReference type="SwissPalm" id="P14679"/>
<dbReference type="BioMuta" id="TYR"/>
<dbReference type="DMDM" id="401235"/>
<dbReference type="MassIVE" id="P14679"/>
<dbReference type="PaxDb" id="9606-ENSP00000263321"/>
<dbReference type="PeptideAtlas" id="P14679"/>
<dbReference type="ProteomicsDB" id="53077">
    <molecule id="P14679-1"/>
</dbReference>
<dbReference type="ProteomicsDB" id="53078">
    <molecule id="P14679-2"/>
</dbReference>
<dbReference type="ABCD" id="P14679">
    <property type="antibodies" value="3 sequenced antibodies"/>
</dbReference>
<dbReference type="Antibodypedia" id="3663">
    <property type="antibodies" value="911 antibodies from 38 providers"/>
</dbReference>
<dbReference type="DNASU" id="7299"/>
<dbReference type="Ensembl" id="ENST00000263321.6">
    <molecule id="P14679-1"/>
    <property type="protein sequence ID" value="ENSP00000263321.4"/>
    <property type="gene ID" value="ENSG00000077498.9"/>
</dbReference>
<dbReference type="GeneID" id="7299"/>
<dbReference type="KEGG" id="hsa:7299"/>
<dbReference type="MANE-Select" id="ENST00000263321.6">
    <property type="protein sequence ID" value="ENSP00000263321.4"/>
    <property type="RefSeq nucleotide sequence ID" value="NM_000372.5"/>
    <property type="RefSeq protein sequence ID" value="NP_000363.1"/>
</dbReference>
<dbReference type="UCSC" id="uc001pcs.4">
    <molecule id="P14679-1"/>
    <property type="organism name" value="human"/>
</dbReference>
<dbReference type="AGR" id="HGNC:12442"/>
<dbReference type="CTD" id="7299"/>
<dbReference type="DisGeNET" id="7299"/>
<dbReference type="GeneCards" id="TYR"/>
<dbReference type="HGNC" id="HGNC:12442">
    <property type="gene designation" value="TYR"/>
</dbReference>
<dbReference type="HPA" id="ENSG00000077498">
    <property type="expression patterns" value="Tissue enriched (skin)"/>
</dbReference>
<dbReference type="MalaCards" id="TYR"/>
<dbReference type="MIM" id="203100">
    <property type="type" value="phenotype"/>
</dbReference>
<dbReference type="MIM" id="601800">
    <property type="type" value="phenotype"/>
</dbReference>
<dbReference type="MIM" id="606933">
    <property type="type" value="gene"/>
</dbReference>
<dbReference type="MIM" id="606952">
    <property type="type" value="phenotype"/>
</dbReference>
<dbReference type="neXtProt" id="NX_P14679"/>
<dbReference type="OpenTargets" id="ENSG00000077498"/>
<dbReference type="Orphanet" id="352734">
    <property type="disease" value="Minimal pigment oculocutaneous albinism type 1"/>
</dbReference>
<dbReference type="Orphanet" id="79431">
    <property type="disease" value="Oculocutaneous albinism type 1A"/>
</dbReference>
<dbReference type="Orphanet" id="79434">
    <property type="disease" value="Oculocutaneous albinism type 1B"/>
</dbReference>
<dbReference type="Orphanet" id="352737">
    <property type="disease" value="Temperature-sensitive oculocutaneous albinism type 1"/>
</dbReference>
<dbReference type="Orphanet" id="895">
    <property type="disease" value="Waardenburg syndrome type 2"/>
</dbReference>
<dbReference type="PharmGKB" id="PA37095"/>
<dbReference type="VEuPathDB" id="HostDB:ENSG00000077498"/>
<dbReference type="eggNOG" id="ENOG502QRET">
    <property type="taxonomic scope" value="Eukaryota"/>
</dbReference>
<dbReference type="GeneTree" id="ENSGT00940000155336"/>
<dbReference type="HOGENOM" id="CLU_038693_1_0_1"/>
<dbReference type="InParanoid" id="P14679"/>
<dbReference type="OMA" id="PMDKMAN"/>
<dbReference type="OrthoDB" id="6132182at2759"/>
<dbReference type="PAN-GO" id="P14679">
    <property type="GO annotations" value="3 GO annotations based on evolutionary models"/>
</dbReference>
<dbReference type="PhylomeDB" id="P14679"/>
<dbReference type="TreeFam" id="TF315865"/>
<dbReference type="BioCyc" id="MetaCyc:HS01248-MONOMER"/>
<dbReference type="BRENDA" id="1.14.18.1">
    <property type="organism ID" value="2681"/>
</dbReference>
<dbReference type="PathwayCommons" id="P14679"/>
<dbReference type="Reactome" id="R-HSA-5662702">
    <property type="pathway name" value="Melanin biosynthesis"/>
</dbReference>
<dbReference type="Reactome" id="R-HSA-9824585">
    <property type="pathway name" value="Regulation of MITF-M-dependent genes involved in pigmentation"/>
</dbReference>
<dbReference type="SABIO-RK" id="P14679"/>
<dbReference type="SignaLink" id="P14679"/>
<dbReference type="SIGNOR" id="P14679"/>
<dbReference type="BioGRID-ORCS" id="7299">
    <property type="hits" value="10 hits in 1155 CRISPR screens"/>
</dbReference>
<dbReference type="ChiTaRS" id="TYR">
    <property type="organism name" value="human"/>
</dbReference>
<dbReference type="GeneWiki" id="Tyrosinase"/>
<dbReference type="GenomeRNAi" id="7299"/>
<dbReference type="Pharos" id="P14679">
    <property type="development level" value="Tclin"/>
</dbReference>
<dbReference type="PRO" id="PR:P14679"/>
<dbReference type="Proteomes" id="UP000005640">
    <property type="component" value="Chromosome 11"/>
</dbReference>
<dbReference type="RNAct" id="P14679">
    <property type="molecule type" value="protein"/>
</dbReference>
<dbReference type="Bgee" id="ENSG00000077498">
    <property type="expression patterns" value="Expressed in pigmented layer of retina and 43 other cell types or tissues"/>
</dbReference>
<dbReference type="ExpressionAtlas" id="P14679">
    <property type="expression patterns" value="baseline and differential"/>
</dbReference>
<dbReference type="GO" id="GO:0005737">
    <property type="term" value="C:cytoplasm"/>
    <property type="evidence" value="ECO:0000314"/>
    <property type="project" value="UniProtKB"/>
</dbReference>
<dbReference type="GO" id="GO:0005798">
    <property type="term" value="C:Golgi-associated vesicle"/>
    <property type="evidence" value="ECO:0000304"/>
    <property type="project" value="ProtInc"/>
</dbReference>
<dbReference type="GO" id="GO:0043231">
    <property type="term" value="C:intracellular membrane-bounded organelle"/>
    <property type="evidence" value="ECO:0000314"/>
    <property type="project" value="HPA"/>
</dbReference>
<dbReference type="GO" id="GO:0005764">
    <property type="term" value="C:lysosome"/>
    <property type="evidence" value="ECO:0000304"/>
    <property type="project" value="UniProtKB"/>
</dbReference>
<dbReference type="GO" id="GO:0042470">
    <property type="term" value="C:melanosome"/>
    <property type="evidence" value="ECO:0000250"/>
    <property type="project" value="UniProtKB"/>
</dbReference>
<dbReference type="GO" id="GO:0033162">
    <property type="term" value="C:melanosome membrane"/>
    <property type="evidence" value="ECO:0000304"/>
    <property type="project" value="Reactome"/>
</dbReference>
<dbReference type="GO" id="GO:0048471">
    <property type="term" value="C:perinuclear region of cytoplasm"/>
    <property type="evidence" value="ECO:0000314"/>
    <property type="project" value="UniProtKB"/>
</dbReference>
<dbReference type="GO" id="GO:0005507">
    <property type="term" value="F:copper ion binding"/>
    <property type="evidence" value="ECO:0000315"/>
    <property type="project" value="UniProtKB"/>
</dbReference>
<dbReference type="GO" id="GO:0042802">
    <property type="term" value="F:identical protein binding"/>
    <property type="evidence" value="ECO:0000314"/>
    <property type="project" value="UniProtKB"/>
</dbReference>
<dbReference type="GO" id="GO:0042803">
    <property type="term" value="F:protein homodimerization activity"/>
    <property type="evidence" value="ECO:0000250"/>
    <property type="project" value="UniProtKB"/>
</dbReference>
<dbReference type="GO" id="GO:0004503">
    <property type="term" value="F:tyrosinase activity"/>
    <property type="evidence" value="ECO:0000314"/>
    <property type="project" value="UniProtKB"/>
</dbReference>
<dbReference type="GO" id="GO:0008283">
    <property type="term" value="P:cell population proliferation"/>
    <property type="evidence" value="ECO:0007669"/>
    <property type="project" value="Ensembl"/>
</dbReference>
<dbReference type="GO" id="GO:0006726">
    <property type="term" value="P:eye pigment biosynthetic process"/>
    <property type="evidence" value="ECO:0000304"/>
    <property type="project" value="ProtInc"/>
</dbReference>
<dbReference type="GO" id="GO:0042438">
    <property type="term" value="P:melanin biosynthetic process"/>
    <property type="evidence" value="ECO:0000314"/>
    <property type="project" value="CACAO"/>
</dbReference>
<dbReference type="GO" id="GO:0006583">
    <property type="term" value="P:melanin biosynthetic process from tyrosine"/>
    <property type="evidence" value="ECO:0000304"/>
    <property type="project" value="ProtInc"/>
</dbReference>
<dbReference type="GO" id="GO:0043473">
    <property type="term" value="P:pigmentation"/>
    <property type="evidence" value="ECO:0000318"/>
    <property type="project" value="GO_Central"/>
</dbReference>
<dbReference type="GO" id="GO:0009637">
    <property type="term" value="P:response to blue light"/>
    <property type="evidence" value="ECO:0000314"/>
    <property type="project" value="UniProtKB"/>
</dbReference>
<dbReference type="GO" id="GO:0051591">
    <property type="term" value="P:response to cAMP"/>
    <property type="evidence" value="ECO:0007669"/>
    <property type="project" value="Ensembl"/>
</dbReference>
<dbReference type="GO" id="GO:0009411">
    <property type="term" value="P:response to UV"/>
    <property type="evidence" value="ECO:0007669"/>
    <property type="project" value="Ensembl"/>
</dbReference>
<dbReference type="GO" id="GO:0033280">
    <property type="term" value="P:response to vitamin D"/>
    <property type="evidence" value="ECO:0007669"/>
    <property type="project" value="Ensembl"/>
</dbReference>
<dbReference type="GO" id="GO:0048538">
    <property type="term" value="P:thymus development"/>
    <property type="evidence" value="ECO:0007669"/>
    <property type="project" value="Ensembl"/>
</dbReference>
<dbReference type="GO" id="GO:0007601">
    <property type="term" value="P:visual perception"/>
    <property type="evidence" value="ECO:0000304"/>
    <property type="project" value="ProtInc"/>
</dbReference>
<dbReference type="FunFam" id="1.10.1280.10:FF:000003">
    <property type="entry name" value="Tyrosinase"/>
    <property type="match status" value="1"/>
</dbReference>
<dbReference type="Gene3D" id="1.10.1280.10">
    <property type="entry name" value="Di-copper center containing domain from catechol oxidase"/>
    <property type="match status" value="1"/>
</dbReference>
<dbReference type="InterPro" id="IPR008922">
    <property type="entry name" value="Di-copper_centre_dom_sf"/>
</dbReference>
<dbReference type="InterPro" id="IPR050316">
    <property type="entry name" value="Tyrosinase/Hemocyanin"/>
</dbReference>
<dbReference type="InterPro" id="IPR002227">
    <property type="entry name" value="Tyrosinase_Cu-bd"/>
</dbReference>
<dbReference type="PANTHER" id="PTHR11474:SF124">
    <property type="entry name" value="TYROSINASE"/>
    <property type="match status" value="1"/>
</dbReference>
<dbReference type="PANTHER" id="PTHR11474">
    <property type="entry name" value="TYROSINASE FAMILY MEMBER"/>
    <property type="match status" value="1"/>
</dbReference>
<dbReference type="Pfam" id="PF00264">
    <property type="entry name" value="Tyrosinase"/>
    <property type="match status" value="1"/>
</dbReference>
<dbReference type="PRINTS" id="PR00092">
    <property type="entry name" value="TYROSINASE"/>
</dbReference>
<dbReference type="SUPFAM" id="SSF48056">
    <property type="entry name" value="Di-copper centre-containing domain"/>
    <property type="match status" value="1"/>
</dbReference>
<dbReference type="PROSITE" id="PS00497">
    <property type="entry name" value="TYROSINASE_1"/>
    <property type="match status" value="1"/>
</dbReference>
<dbReference type="PROSITE" id="PS00498">
    <property type="entry name" value="TYROSINASE_2"/>
    <property type="match status" value="1"/>
</dbReference>
<sequence>MLLAVLYCLLWSFQTSAGHFPRACVSSKNLMEKECCPPWSGDRSPCGQLSGRGSCQNILLSNAPLGPQFPFTGVDDRESWPSVFYNRTCQCSGNFMGFNCGNCKFGFWGPNCTERRLLVRRNIFDLSAPEKDKFFAYLTLAKHTISSDYVIPIGTYGQMKNGSTPMFNDINIYDLFVWMHYYVSMDALLGGSEIWRDIDFAHEAPAFLPWHRLFLLRWEQEIQKLTGDENFTIPYWDWRDAEKCDICTDEYMGGQHPTNPNLLSPASFFSSWQIVCSRLEEYNSHQSLCNGTPEGPLRRNPGNHDKSRTPRLPSSADVEFCLSLTQYESGSMDKAANFSFRNTLEGFASPLTGIADASQSSMHNALHIYMNGTMSQVQGSANDPIFLLHHAFVDSIFEQWLRRHRPLQEVYPEANAPIGHNRESYMVPFIPLYRNGDFFISSKDLGYDYSYLQDSDPDSFQDYIKSYLEQASRIWSWLLGAAMVGAVLTALLAGLVSLLCRHKRKQLPEEKQPLLMEKEDYHSLYQSHL</sequence>
<name>TYRO_HUMAN</name>
<comment type="function">
    <text evidence="1 28">This is a copper-containing oxidase that functions in the formation of pigments such as melanins and other polyphenolic compounds. Catalyzes the initial and rate limiting step in the cascade of reactions leading to melanin production from tyrosine (By similarity). In addition to hydroxylating tyrosine to DOPA (3,4-dihydroxyphenylalanine), also catalyzes the oxidation of DOPA to DOPA-quinone, and possibly the oxidation of DHI (5,6-dihydroxyindole) to indole-5,6 quinone (PubMed:28661582).</text>
</comment>
<comment type="catalytic activity">
    <reaction evidence="28">
        <text>2 L-dopa + O2 = 2 L-dopaquinone + 2 H2O</text>
        <dbReference type="Rhea" id="RHEA:34287"/>
        <dbReference type="ChEBI" id="CHEBI:15377"/>
        <dbReference type="ChEBI" id="CHEBI:15379"/>
        <dbReference type="ChEBI" id="CHEBI:57504"/>
        <dbReference type="ChEBI" id="CHEBI:57924"/>
        <dbReference type="EC" id="1.14.18.1"/>
    </reaction>
    <physiologicalReaction direction="left-to-right" evidence="40">
        <dbReference type="Rhea" id="RHEA:34288"/>
    </physiologicalReaction>
</comment>
<comment type="catalytic activity">
    <reaction evidence="28">
        <text>L-tyrosine + O2 = L-dopaquinone + H2O</text>
        <dbReference type="Rhea" id="RHEA:18117"/>
        <dbReference type="ChEBI" id="CHEBI:15377"/>
        <dbReference type="ChEBI" id="CHEBI:15379"/>
        <dbReference type="ChEBI" id="CHEBI:57924"/>
        <dbReference type="ChEBI" id="CHEBI:58315"/>
        <dbReference type="EC" id="1.14.18.1"/>
    </reaction>
    <physiologicalReaction direction="left-to-right" evidence="40">
        <dbReference type="Rhea" id="RHEA:18118"/>
    </physiologicalReaction>
</comment>
<comment type="catalytic activity">
    <reaction evidence="28">
        <text>2 5,6-dihydroxyindole-2-carboxylate + O2 = 2 indole-5,6-quinone-2-carboxylate + 2 H2O</text>
        <dbReference type="Rhea" id="RHEA:68388"/>
        <dbReference type="ChEBI" id="CHEBI:15377"/>
        <dbReference type="ChEBI" id="CHEBI:15379"/>
        <dbReference type="ChEBI" id="CHEBI:16875"/>
        <dbReference type="ChEBI" id="CHEBI:177869"/>
    </reaction>
    <physiologicalReaction direction="left-to-right" evidence="40">
        <dbReference type="Rhea" id="RHEA:68389"/>
    </physiologicalReaction>
</comment>
<comment type="cofactor">
    <cofactor evidence="2">
        <name>Cu(2+)</name>
        <dbReference type="ChEBI" id="CHEBI:29036"/>
    </cofactor>
    <text evidence="2">Binds 2 copper ions per subunit.</text>
</comment>
<comment type="subunit">
    <text evidence="29">Forms an OPN3-dependent complex with DCT in response to blue light in melanocytes.</text>
</comment>
<comment type="interaction">
    <interactant intactId="EBI-25397340">
        <id>P14679</id>
    </interactant>
    <interactant intactId="EBI-2509708">
        <id>P51810</id>
        <label>GPR143</label>
    </interactant>
    <organismsDiffer>false</organismsDiffer>
    <experiments>4</experiments>
</comment>
<comment type="interaction">
    <interactant intactId="EBI-25894402">
        <id>P14679-2</id>
    </interactant>
    <interactant intactId="EBI-949378">
        <id>Q14457</id>
        <label>BECN1</label>
    </interactant>
    <organismsDiffer>false</organismsDiffer>
    <experiments>3</experiments>
</comment>
<comment type="interaction">
    <interactant intactId="EBI-25894402">
        <id>P14679-2</id>
    </interactant>
    <interactant intactId="EBI-351467">
        <id>P26641</id>
        <label>EEF1G</label>
    </interactant>
    <organismsDiffer>false</organismsDiffer>
    <experiments>3</experiments>
</comment>
<comment type="interaction">
    <interactant intactId="EBI-25894402">
        <id>P14679-2</id>
    </interactant>
    <interactant intactId="EBI-17438286">
        <id>Q8WTV1</id>
        <label>THAP3</label>
    </interactant>
    <organismsDiffer>false</organismsDiffer>
    <experiments>3</experiments>
</comment>
<comment type="interaction">
    <interactant intactId="EBI-25894402">
        <id>P14679-2</id>
    </interactant>
    <interactant intactId="EBI-25857007">
        <id>Q6ZMY6-2</id>
        <label>WDR88</label>
    </interactant>
    <organismsDiffer>false</organismsDiffer>
    <experiments>3</experiments>
</comment>
<comment type="subcellular location">
    <subcellularLocation>
        <location evidence="12 16">Melanosome membrane</location>
        <topology evidence="12 16">Single-pass type I membrane protein</topology>
    </subcellularLocation>
    <subcellularLocation>
        <location evidence="1">Melanosome</location>
    </subcellularLocation>
    <text evidence="1">Proper trafficking to melanosome is regulated by SGSM2, ANKRD27, RAB9A, RAB32 and RAB38.</text>
</comment>
<comment type="alternative products">
    <event type="alternative splicing"/>
    <isoform>
        <id>P14679-1</id>
        <name>1</name>
        <sequence type="displayed"/>
    </isoform>
    <isoform>
        <id>P14679-2</id>
        <name>2</name>
        <sequence type="described" ref="VSP_006701 VSP_006702"/>
    </isoform>
</comment>
<comment type="induction">
    <text>Increased expression after UVB irradiation.</text>
</comment>
<comment type="PTM">
    <text evidence="1">Glycosylated.</text>
</comment>
<comment type="polymorphism">
    <text evidence="17 18">Genetic variants in TYR define the skin/hair/eye pigmentation variation locus 3 (SHEP3) [MIM:601800]. Hair, eye and skin pigmentation are among the most visible examples of human phenotypic variation, with a broad normal range that is subject to substantial geographic stratification. In the case of skin, individuals tend to have lighter pigmentation with increasing distance from the equator. By contrast, the majority of variation in human eye and hair color is found among individuals of European ancestry, with most other human populations fixed for brown eyes and black hair.</text>
</comment>
<comment type="polymorphism">
    <text evidence="25 31 36">Compound heterozygosity for the R402Q polymorphism and a mutant allele of TYR is a common cause of autosomal recessive ocular albinism. The R402Q polymorphism is also found in Waardenburg syndrome type II with ocular albinism in association with a deletion in the MITF gene.</text>
</comment>
<comment type="disease" evidence="5 6 7 10 11 13 14 15 19 22 23 24 25 26 27 30 31 32 33 34 35 37">
    <disease id="DI-02088">
        <name>Albinism, oculocutaneous, 1A</name>
        <acronym>OCA1A</acronym>
        <description>An autosomal recessive disorder in which the biosynthesis of melanin pigment is absent in skin, hair, and eyes. It is characterized by complete lack of tyrosinase activity due to production of an inactive enzyme. Patients present with a life-long absence of melanin pigment after birth, and manifest increased sensitivity to ultraviolet radiation with predisposition to skin cancer. Visual anomalies include decreased acuity, nystagmus, strabismus and photophobia.</description>
        <dbReference type="MIM" id="203100"/>
    </disease>
    <text>The disease is caused by variants affecting the gene represented in this entry.</text>
</comment>
<comment type="disease" evidence="7 20 21 33 37">
    <disease id="DI-02089">
        <name>Albinism, oculocutaneous, 1B</name>
        <acronym>OCA1B</acronym>
        <description>An autosomal recessive disorder in which the biosynthesis of melanin pigment is reduced in skin, hair, and eyes. It is characterized by partial lack of tyrosinase activity. Patients have white hair at birth that rapidly turns yellow or blond. They manifest the development of minimal-to-moderate amounts of cutaneous and ocular pigment. Some patients may have with white hair in the warmer areas (scalp and axilla) and progressively darker hair in the cooler areas (extremities). This variant phenotype is due to a loss of tyrosinase activity above 35-37 degrees C.</description>
        <dbReference type="MIM" id="606952"/>
    </disease>
    <text>The disease is caused by variants affecting the gene represented in this entry.</text>
</comment>
<comment type="similarity">
    <text evidence="39">Belongs to the tyrosinase family.</text>
</comment>
<comment type="sequence caution" evidence="39">
    <conflict type="erroneous initiation">
        <sequence resource="EMBL-CDS" id="AAA61241"/>
    </conflict>
    <text>Extended N-terminus.</text>
</comment>
<comment type="sequence caution" evidence="39">
    <conflict type="erroneous initiation">
        <sequence resource="EMBL-CDS" id="CAA68756"/>
    </conflict>
    <text>Extended N-terminus.</text>
</comment>
<comment type="online information" name="Albinism database (ADB)">
    <link uri="http://www.ifpcs.org/albinism/oca1mut.html"/>
    <text>TYR mutations</text>
</comment>
<comment type="online information" name="Protein Spotlight">
    <link uri="https://www.proteinspotlight.org/back_issues/049"/>
    <text>Snowy stardom - Issue 49 of August 2004</text>
</comment>
<comment type="online information" name="Wikipedia">
    <link uri="https://en.wikipedia.org/wiki/Tyrosinase"/>
    <text>Tyrosinase entry</text>
</comment>
<comment type="online information" name="Atlas of Genetics and Cytogenetics in Oncology and Haematology">
    <link uri="https://atlasgeneticsoncology.org/gene/42738/TYR"/>
</comment>
<feature type="signal peptide" evidence="3">
    <location>
        <begin position="1"/>
        <end position="18"/>
    </location>
</feature>
<feature type="chain" id="PRO_0000035879" description="Tyrosinase">
    <location>
        <begin position="19"/>
        <end position="529"/>
    </location>
</feature>
<feature type="topological domain" description="Lumenal, melanosome" evidence="3">
    <location>
        <begin position="19"/>
        <end position="476"/>
    </location>
</feature>
<feature type="transmembrane region" description="Helical" evidence="3">
    <location>
        <begin position="477"/>
        <end position="497"/>
    </location>
</feature>
<feature type="topological domain" description="Cytoplasmic" evidence="3">
    <location>
        <begin position="498"/>
        <end position="529"/>
    </location>
</feature>
<feature type="region of interest" description="Disordered" evidence="4">
    <location>
        <begin position="287"/>
        <end position="313"/>
    </location>
</feature>
<feature type="binding site" evidence="2">
    <location>
        <position position="180"/>
    </location>
    <ligand>
        <name>Cu cation</name>
        <dbReference type="ChEBI" id="CHEBI:23378"/>
        <label>A</label>
    </ligand>
</feature>
<feature type="binding site" evidence="2">
    <location>
        <position position="202"/>
    </location>
    <ligand>
        <name>Cu cation</name>
        <dbReference type="ChEBI" id="CHEBI:23378"/>
        <label>A</label>
    </ligand>
</feature>
<feature type="binding site" evidence="2">
    <location>
        <position position="211"/>
    </location>
    <ligand>
        <name>Cu cation</name>
        <dbReference type="ChEBI" id="CHEBI:23378"/>
        <label>A</label>
    </ligand>
</feature>
<feature type="binding site" evidence="2">
    <location>
        <position position="363"/>
    </location>
    <ligand>
        <name>Cu cation</name>
        <dbReference type="ChEBI" id="CHEBI:23378"/>
        <label>B</label>
    </ligand>
</feature>
<feature type="binding site" evidence="2">
    <location>
        <position position="367"/>
    </location>
    <ligand>
        <name>Cu cation</name>
        <dbReference type="ChEBI" id="CHEBI:23378"/>
        <label>B</label>
    </ligand>
</feature>
<feature type="binding site" evidence="2">
    <location>
        <position position="390"/>
    </location>
    <ligand>
        <name>Cu cation</name>
        <dbReference type="ChEBI" id="CHEBI:23378"/>
        <label>B</label>
    </ligand>
</feature>
<feature type="glycosylation site" description="N-linked (GlcNAc...) asparagine" evidence="3">
    <location>
        <position position="86"/>
    </location>
</feature>
<feature type="glycosylation site" description="N-linked (GlcNAc...) asparagine" evidence="3">
    <location>
        <position position="111"/>
    </location>
</feature>
<feature type="glycosylation site" description="N-linked (GlcNAc...) asparagine" evidence="3">
    <location>
        <position position="161"/>
    </location>
</feature>
<feature type="glycosylation site" description="N-linked (GlcNAc...) asparagine" evidence="3">
    <location>
        <position position="230"/>
    </location>
</feature>
<feature type="glycosylation site" description="N-linked (GlcNAc...) asparagine" evidence="3">
    <location>
        <position position="337"/>
    </location>
</feature>
<feature type="glycosylation site" description="N-linked (GlcNAc...) asparagine" evidence="3">
    <location>
        <position position="371"/>
    </location>
</feature>
<feature type="splice variant" id="VSP_006701" description="In isoform 2." evidence="38">
    <original>GFASPLTGIADASQSSMHNALHIYMNGTMSQV</original>
    <variation>EMGFLHVGWAGLKLLTSRDPPPWPPKMLGLQA</variation>
    <location>
        <begin position="346"/>
        <end position="377"/>
    </location>
</feature>
<feature type="splice variant" id="VSP_006702" description="In isoform 2." evidence="38">
    <location>
        <begin position="378"/>
        <end position="529"/>
    </location>
</feature>
<feature type="sequence variant" id="VAR_007649" description="In OCA1A; dbSNP:rs61753177." evidence="34">
    <original>H</original>
    <variation>Q</variation>
    <location>
        <position position="19"/>
    </location>
</feature>
<feature type="sequence variant" id="VAR_007650" description="In OCA1A; dbSNP:rs61753178." evidence="15">
    <original>P</original>
    <variation>S</variation>
    <location>
        <position position="21"/>
    </location>
</feature>
<feature type="sequence variant" id="VAR_021683" description="In OCA1A; dbSNP:rs61753179." evidence="7">
    <original>C</original>
    <variation>Y</variation>
    <location>
        <position position="36"/>
    </location>
</feature>
<feature type="sequence variant" id="VAR_007651" description="In OCA1A; dbSNP:rs28940878." evidence="22">
    <original>D</original>
    <variation>G</variation>
    <location>
        <position position="42"/>
    </location>
</feature>
<feature type="sequence variant" id="VAR_021684" description="In OCA1A; dbSNP:rs2135241781." evidence="14">
    <original>S</original>
    <variation>G</variation>
    <location>
        <position position="44"/>
    </location>
</feature>
<feature type="sequence variant" id="VAR_021685" description="In OCA1A; dbSNP:rs755700581." evidence="14">
    <original>S</original>
    <variation>R</variation>
    <location>
        <position position="44"/>
    </location>
</feature>
<feature type="sequence variant" id="VAR_007652" description="In OCA1A; dbSNP:rs61753180." evidence="10 14 33">
    <original>G</original>
    <variation>D</variation>
    <location>
        <position position="47"/>
    </location>
</feature>
<feature type="sequence variant" id="VAR_021686" description="In OCA1A; dbSNP:rs61753180." evidence="14">
    <original>G</original>
    <variation>V</variation>
    <location>
        <position position="47"/>
    </location>
</feature>
<feature type="sequence variant" id="VAR_072592" description="In OCA1A; dbSNP:rs61753181." evidence="26">
    <original>S</original>
    <variation>L</variation>
    <location>
        <position position="50"/>
    </location>
</feature>
<feature type="sequence variant" id="VAR_007653" description="In OCA1A; dbSNP:rs61753182." evidence="6">
    <original>R</original>
    <variation>I</variation>
    <location>
        <position position="52"/>
    </location>
</feature>
<feature type="sequence variant" id="VAR_007654" description="In OCA1A; dbSNP:rs28940879." evidence="5 22">
    <original>C</original>
    <variation>Y</variation>
    <location>
        <position position="55"/>
    </location>
</feature>
<feature type="sequence variant" id="VAR_021687" description="In OCA1A." evidence="14">
    <original>Q</original>
    <variation>H</variation>
    <location>
        <position position="68"/>
    </location>
</feature>
<feature type="sequence variant" id="VAR_007655" description="In OCA1A; dbSNP:rs61753185." evidence="7 10 14">
    <original>R</original>
    <variation>Q</variation>
    <location>
        <position position="77"/>
    </location>
</feature>
<feature type="sequence variant" id="VAR_009236" description="In OCA1A." evidence="5">
    <original>R</original>
    <variation>RR</variation>
    <location>
        <position position="77"/>
    </location>
</feature>
<feature type="sequence variant" id="VAR_007656" description="In OCA1A; dbSNP:rs61753184." evidence="7 26">
    <original>R</original>
    <variation>W</variation>
    <location>
        <position position="77"/>
    </location>
</feature>
<feature type="sequence variant" id="VAR_021688" description="In OCA1A; dbSNP:rs544053015." evidence="14">
    <original>S</original>
    <variation>L</variation>
    <location>
        <position position="79"/>
    </location>
</feature>
<feature type="sequence variant" id="VAR_007657" description="In OCA1A; dbSNP:rs61753188." evidence="37">
    <original>W</original>
    <variation>R</variation>
    <location>
        <position position="80"/>
    </location>
</feature>
<feature type="sequence variant" id="VAR_007658" description="In OCA1A; dbSNP:rs28940876." evidence="7 14 23">
    <original>P</original>
    <variation>L</variation>
    <location>
        <position position="81"/>
    </location>
</feature>
<feature type="sequence variant" id="VAR_007659" description="In OCA1A; dbSNP:rs28940877." evidence="19">
    <original>C</original>
    <variation>R</variation>
    <location>
        <position position="89"/>
    </location>
</feature>
<feature type="sequence variant" id="VAR_072593" description="In OCA1A; dbSNP:rs137854890." evidence="24">
    <original>C</original>
    <variation>Y</variation>
    <location>
        <position position="91"/>
    </location>
</feature>
<feature type="sequence variant" id="VAR_007660" description="In OCA1A; dbSNP:rs61753252." evidence="7">
    <original>G</original>
    <variation>R</variation>
    <location>
        <position position="97"/>
    </location>
</feature>
<feature type="sequence variant" id="VAR_021689" description="In OCA1A; dbSNP:rs61753253." evidence="10">
    <original>G</original>
    <variation>R</variation>
    <location>
        <position position="109"/>
    </location>
</feature>
<feature type="sequence variant" id="VAR_034576" description="In dbSNP:rs33955261.">
    <original>F</original>
    <variation>C</variation>
    <location>
        <position position="134"/>
    </location>
</feature>
<feature type="sequence variant" id="VAR_042665" description="In dbSNP:rs11545463.">
    <original>K</original>
    <variation>N</variation>
    <location>
        <position position="142"/>
    </location>
</feature>
<feature type="sequence variant" id="VAR_007925" description="In OCA1B; dbSNP:rs145513733." evidence="33">
    <original>P</original>
    <variation>S</variation>
    <location>
        <position position="152"/>
    </location>
</feature>
<feature type="sequence variant" id="VAR_021690" description="In OCA1A." evidence="14">
    <original>T</original>
    <variation>S</variation>
    <location>
        <position position="155"/>
    </location>
</feature>
<feature type="sequence variant" id="VAR_007661" description="In OCA1A; dbSNP:rs61753259." evidence="13">
    <original>F</original>
    <variation>I</variation>
    <location>
        <position position="176"/>
    </location>
</feature>
<feature type="sequence variant" id="VAR_021691" description="In OCA1A; dbSNP:rs138487695." evidence="14">
    <original>V</original>
    <variation>F</variation>
    <location>
        <position position="177"/>
    </location>
</feature>
<feature type="sequence variant" id="VAR_021692" description="In OCA1A." evidence="14">
    <original>M</original>
    <variation>L</variation>
    <location>
        <position position="179"/>
    </location>
</feature>
<feature type="sequence variant" id="VAR_021693" description="In OCA1A; dbSNP:rs779878377." evidence="14">
    <original>H</original>
    <variation>N</variation>
    <location>
        <position position="180"/>
    </location>
</feature>
<feature type="sequence variant" id="VAR_007662" description="Associated with SHEP3; light/dark skin; dbSNP:rs1042602." evidence="7 8 9 14 17 18 25">
    <original>S</original>
    <variation>Y</variation>
    <location>
        <position position="192"/>
    </location>
</feature>
<feature type="sequence variant" id="VAR_071756" description="In OCA1A; dbSNP:rs750553908." evidence="27">
    <original>I</original>
    <variation>T</variation>
    <location>
        <position position="198"/>
    </location>
</feature>
<feature type="sequence variant" id="VAR_021694" description="In OCA1A; dbSNP:rs1338186937." evidence="14">
    <original>D</original>
    <variation>N</variation>
    <location>
        <position position="199"/>
    </location>
</feature>
<feature type="sequence variant" id="VAR_021695" description="In OCA1A." evidence="14">
    <original>A</original>
    <variation>S</variation>
    <location>
        <position position="201"/>
    </location>
</feature>
<feature type="sequence variant" id="VAR_021696" description="In OCA1A; dbSNP:rs61754362." evidence="10">
    <original>P</original>
    <variation>T</variation>
    <location>
        <position position="205"/>
    </location>
</feature>
<feature type="sequence variant" id="VAR_007663" description="In OCA1A; dbSNP:rs28940880." evidence="22">
    <original>A</original>
    <variation>T</variation>
    <location>
        <position position="206"/>
    </location>
</feature>
<feature type="sequence variant" id="VAR_007664" description="In OCA1A; dbSNP:rs61754363." evidence="34">
    <original>L</original>
    <variation>M</variation>
    <location>
        <position position="216"/>
    </location>
</feature>
<feature type="sequence variant" id="VAR_007665" description="In OCA1A; dbSNP:rs63159160." evidence="37">
    <original>R</original>
    <variation>G</variation>
    <location>
        <position position="217"/>
    </location>
</feature>
<feature type="sequence variant" id="VAR_007667" description="In OCA1A; dbSNP:rs61754365." evidence="7 13">
    <original>R</original>
    <variation>Q</variation>
    <location>
        <position position="217"/>
    </location>
</feature>
<feature type="sequence variant" id="VAR_021697" description="In OCA1A." evidence="14">
    <original>R</original>
    <variation>S</variation>
    <location>
        <position position="217"/>
    </location>
</feature>
<feature type="sequence variant" id="VAR_007666" description="In OCA1A; dbSNP:rs63159160." evidence="7 15">
    <original>R</original>
    <variation>W</variation>
    <location>
        <position position="217"/>
    </location>
</feature>
<feature type="sequence variant" id="VAR_007926" description="In OCA1A." evidence="33">
    <location>
        <position position="217"/>
    </location>
</feature>
<feature type="sequence variant" id="VAR_021698" description="In OCA1A.">
    <location>
        <position position="227"/>
    </location>
</feature>
<feature type="sequence variant" id="VAR_021699" description="In OCA1A." evidence="14">
    <original>W</original>
    <variation>L</variation>
    <location>
        <position position="236"/>
    </location>
</feature>
<feature type="sequence variant" id="VAR_021700" description="In OCA1A; dbSNP:rs61754367." evidence="7">
    <original>W</original>
    <variation>S</variation>
    <location>
        <position position="236"/>
    </location>
</feature>
<feature type="sequence variant" id="VAR_021701" description="In OCA1A; dbSNP:rs774670098." evidence="11">
    <original>R</original>
    <variation>W</variation>
    <location>
        <position position="239"/>
    </location>
</feature>
<feature type="sequence variant" id="VAR_021702" description="In OCA1A." evidence="14">
    <original>D</original>
    <variation>V</variation>
    <location>
        <position position="240"/>
    </location>
</feature>
<feature type="sequence variant" id="VAR_021703" description="In OCA1A." evidence="14">
    <original>K</original>
    <variation>T</variation>
    <location>
        <position position="243"/>
    </location>
</feature>
<feature type="sequence variant" id="VAR_007668" description="In OCA1A; dbSNP:rs61754369." evidence="37">
    <original>G</original>
    <variation>R</variation>
    <location>
        <position position="253"/>
    </location>
</feature>
<feature type="sequence variant" id="VAR_021704" description="In OCA1A; dbSNP:rs61754370." evidence="10 14">
    <original>H</original>
    <variation>Y</variation>
    <location>
        <position position="256"/>
    </location>
</feature>
<feature type="sequence variant" id="VAR_021705" description="In OCA1A; dbSNP:rs62645902." evidence="7">
    <original>W</original>
    <variation>C</variation>
    <location>
        <position position="272"/>
    </location>
</feature>
<feature type="sequence variant" id="VAR_007669" description="In OCA1B and OCA1A; dbSNP:rs104894314." evidence="10 21 26">
    <original>V</original>
    <variation>F</variation>
    <location>
        <position position="275"/>
    </location>
</feature>
<feature type="sequence variant" id="VAR_007927" description="In OCA1A; dbSNP:rs1463109821." evidence="32">
    <original>L</original>
    <variation>S</variation>
    <location>
        <position position="288"/>
    </location>
</feature>
<feature type="sequence variant" id="VAR_009237" description="In OCA1A." evidence="5">
    <original>C</original>
    <variation>G</variation>
    <location>
        <position position="289"/>
    </location>
</feature>
<feature type="sequence variant" id="VAR_007670" description="In OCA1A; dbSNP:rs1468041471." evidence="7 14">
    <original>C</original>
    <variation>R</variation>
    <location>
        <position position="289"/>
    </location>
</feature>
<feature type="sequence variant" id="VAR_021706" description="In OCA1A; dbSNP:rs1565391875." evidence="7">
    <original>E</original>
    <variation>G</variation>
    <location>
        <position position="294"/>
    </location>
</feature>
<feature type="sequence variant" id="VAR_007928" description="In OCA1A and OCA1B; dbSNP:rs757754120." evidence="7 10 33">
    <original>E</original>
    <variation>K</variation>
    <location>
        <position position="294"/>
    </location>
</feature>
<feature type="sequence variant" id="VAR_072594" description="In OCA1A; dbSNP:rs200854796." evidence="26">
    <original>R</original>
    <variation>W</variation>
    <location>
        <position position="298"/>
    </location>
</feature>
<feature type="sequence variant" id="VAR_007671" description="In OCA1A; dbSNP:rs61754375." evidence="5 15 33">
    <original>R</original>
    <variation>H</variation>
    <location>
        <position position="299"/>
    </location>
</feature>
<feature type="sequence variant" id="VAR_007672" description="In OCA1A; dbSNP:rs61754374." evidence="5">
    <original>R</original>
    <variation>S</variation>
    <location>
        <position position="299"/>
    </location>
</feature>
<feature type="sequence variant" id="VAR_011825" description="In dbSNP:rs1042608.">
    <original>R</original>
    <variation>T</variation>
    <location>
        <position position="308"/>
    </location>
</feature>
<feature type="sequence variant" id="VAR_007673" description="In OCA1A; dbSNP:rs61754377.">
    <original>L</original>
    <variation>V</variation>
    <location>
        <position position="312"/>
    </location>
</feature>
<feature type="sequence variant" id="VAR_007674" description="In OCA1A; dbSNP:rs61754378.">
    <original>P</original>
    <variation>R</variation>
    <location>
        <position position="313"/>
    </location>
</feature>
<feature type="sequence variant" id="VAR_021707" description="In OCA1A." evidence="14">
    <original>V</original>
    <variation>E</variation>
    <location>
        <position position="318"/>
    </location>
</feature>
<feature type="sequence variant" id="VAR_007675" description="In OCA1B; dbSNP:rs61754379." evidence="37">
    <original>T</original>
    <variation>A</variation>
    <location>
        <position position="325"/>
    </location>
</feature>
<feature type="sequence variant" id="VAR_007929" description="In OCA1A; dbSNP:rs61754380." evidence="30">
    <original>E</original>
    <variation>Q</variation>
    <location>
        <position position="328"/>
    </location>
</feature>
<feature type="sequence variant" id="VAR_021708" description="In OCA1A." evidence="14">
    <original>S</original>
    <variation>P</variation>
    <location>
        <position position="329"/>
    </location>
</feature>
<feature type="sequence variant" id="VAR_021709" description="In OCA1A; dbSNP:rs372534292." evidence="14">
    <original>M</original>
    <variation>T</variation>
    <location>
        <position position="332"/>
    </location>
</feature>
<feature type="sequence variant" id="VAR_007676" description="In OCA1A; dbSNP:rs62645906." evidence="10">
    <original>S</original>
    <variation>G</variation>
    <location>
        <position position="339"/>
    </location>
</feature>
<feature type="sequence variant" id="VAR_007677" description="In OCA1A; dbSNP:rs62645907.">
    <original>F</original>
    <variation>L</variation>
    <location>
        <position position="340"/>
    </location>
</feature>
<feature type="sequence variant" id="VAR_021710" description="In OCA1A." evidence="14">
    <original>E</original>
    <variation>G</variation>
    <location>
        <position position="345"/>
    </location>
</feature>
<feature type="sequence variant" id="VAR_007930" description="In OCA1A; dbSNP:rs773970123." evidence="32">
    <original>G</original>
    <variation>E</variation>
    <location>
        <position position="346"/>
    </location>
</feature>
<feature type="sequence variant" id="VAR_007931" description="In OCA1A; dbSNP:rs151206295." evidence="32">
    <original>A</original>
    <variation>E</variation>
    <location>
        <position position="355"/>
    </location>
</feature>
<feature type="sequence variant" id="VAR_007678" description="In OCA1A; dbSNP:rs62645908." evidence="7 10 14">
    <original>A</original>
    <variation>P</variation>
    <location>
        <position position="355"/>
    </location>
</feature>
<feature type="sequence variant" id="VAR_072595" description="In OCA1A; dbSNP:rs151206295." evidence="26">
    <original>A</original>
    <variation>V</variation>
    <location>
        <position position="355"/>
    </location>
</feature>
<feature type="sequence variant" id="VAR_007932" description="In OCA1A; dbSNP:rs61754383." evidence="35">
    <original>S</original>
    <variation>R</variation>
    <location>
        <position position="361"/>
    </location>
</feature>
<feature type="sequence variant" id="VAR_072596" description="In OCA1A; dbSNP:rs1943997081." evidence="26">
    <original>N</original>
    <variation>H</variation>
    <location>
        <position position="364"/>
    </location>
</feature>
<feature type="sequence variant" id="VAR_007933" description="In OCA1A; dbSNP:rs776054795." evidence="31">
    <original>H</original>
    <variation>Y</variation>
    <location>
        <position position="367"/>
    </location>
</feature>
<feature type="sequence variant" id="VAR_007934" description="In OCA1A; dbSNP:rs61754385." evidence="31">
    <original>M</original>
    <variation>T</variation>
    <location>
        <position position="370"/>
    </location>
</feature>
<feature type="sequence variant" id="VAR_007679" description="In OCA1A; dbSNP:rs61754387." evidence="34">
    <original>N</original>
    <variation>T</variation>
    <location>
        <position position="371"/>
    </location>
</feature>
<feature type="sequence variant" id="VAR_007935" description="In OCA1A; dbSNP:rs61754386." evidence="7 35">
    <original>N</original>
    <variation>Y</variation>
    <location>
        <position position="371"/>
    </location>
</feature>
<feature type="sequence variant" id="VAR_007680" description="In OCA1A; dbSNP:rs61754388." evidence="7 10 14 25 26 31 33">
    <original>T</original>
    <variation>K</variation>
    <location>
        <position position="373"/>
    </location>
</feature>
<feature type="sequence variant" id="VAR_021711" description="In OCA1A." evidence="14">
    <original>Q</original>
    <variation>K</variation>
    <location>
        <position position="378"/>
    </location>
</feature>
<feature type="sequence variant" id="VAR_007681" description="In OCA1B; dbSNP:rs61754391." evidence="37">
    <original>S</original>
    <variation>P</variation>
    <location>
        <position position="380"/>
    </location>
</feature>
<feature type="sequence variant" id="VAR_007682" description="In OCA1A; dbSNP:rs104894315." evidence="15">
    <original>N</original>
    <variation>K</variation>
    <location>
        <position position="382"/>
    </location>
</feature>
<feature type="sequence variant" id="VAR_007683" description="In OCA1A; dbSNP:rs121908011." evidence="10 14 25">
    <original>D</original>
    <variation>N</variation>
    <location>
        <position position="383"/>
    </location>
</feature>
<feature type="sequence variant" id="VAR_072597" description="In OCA1A." evidence="26">
    <original>P</original>
    <variation>A</variation>
    <location>
        <position position="384"/>
    </location>
</feature>
<feature type="sequence variant" id="VAR_007684" description="In OCA1B and OCA1A; dbSNP:rs62645914." evidence="37">
    <original>H</original>
    <variation>D</variation>
    <location>
        <position position="390"/>
    </location>
</feature>
<feature type="sequence variant" id="VAR_007936" description="In OCA1A." evidence="14">
    <original>V</original>
    <variation>F</variation>
    <location>
        <position position="393"/>
    </location>
</feature>
<feature type="sequence variant" id="VAR_007685" description="In OCA1A; dbSNP:rs752344007." evidence="37">
    <original>S</original>
    <variation>N</variation>
    <location>
        <position position="395"/>
    </location>
</feature>
<feature type="sequence variant" id="VAR_021712" description="In OCA1A." evidence="14">
    <original>S</original>
    <variation>R</variation>
    <location>
        <position position="395"/>
    </location>
</feature>
<feature type="sequence variant" id="VAR_021713" description="In OCA1A." evidence="14">
    <original>E</original>
    <variation>A</variation>
    <location>
        <position position="398"/>
    </location>
</feature>
<feature type="sequence variant" id="VAR_021714" description="In OCA1A." evidence="14">
    <original>E</original>
    <variation>V</variation>
    <location>
        <position position="398"/>
    </location>
</feature>
<feature type="sequence variant" id="VAR_009238" description="In OCA1A; dbSNP:rs62645916." evidence="5">
    <original>W</original>
    <variation>L</variation>
    <location>
        <position position="400"/>
    </location>
</feature>
<feature type="sequence variant" id="VAR_007937" description="In OCA1B and OCA1A." evidence="32">
    <original>R</original>
    <variation>G</variation>
    <location>
        <position position="402"/>
    </location>
</feature>
<feature type="sequence variant" id="VAR_021715" description="In OCA1A." evidence="14">
    <original>R</original>
    <variation>L</variation>
    <location>
        <position position="402"/>
    </location>
</feature>
<feature type="sequence variant" id="VAR_007686" description="In dbSNP:rs1126809." evidence="7 14 25 31 36">
    <original>R</original>
    <variation>Q</variation>
    <location>
        <position position="402"/>
    </location>
</feature>
<feature type="sequence variant" id="VAR_007687" description="In OCA1A and OCA1B; dbSNP:rs104894316." evidence="7 14 15">
    <original>R</original>
    <variation>S</variation>
    <location>
        <position position="403"/>
    </location>
</feature>
<feature type="sequence variant" id="VAR_021716" description="In OCA1A." evidence="14">
    <original>H</original>
    <variation>N</variation>
    <location>
        <position position="404"/>
    </location>
</feature>
<feature type="sequence variant" id="VAR_007688" description="In OCA-I; dbSNP:rs62645920.">
    <original>H</original>
    <variation>P</variation>
    <location>
        <position position="404"/>
    </location>
</feature>
<feature type="sequence variant" id="VAR_021717" description="In OCA1A." evidence="14">
    <original>R</original>
    <variation>L</variation>
    <location>
        <position position="405"/>
    </location>
</feature>
<feature type="sequence variant" id="VAR_007689" description="In OCA1A and OCA1B; dbSNP:rs104894313." evidence="7 14 21">
    <original>P</original>
    <variation>L</variation>
    <location>
        <position position="406"/>
    </location>
</feature>
<feature type="sequence variant" id="VAR_021718" description="In OCA1A." evidence="14">
    <original>Q</original>
    <variation>H</variation>
    <location>
        <position position="408"/>
    </location>
</feature>
<feature type="sequence variant" id="VAR_021719" description="In OCA1A." evidence="14">
    <original>E</original>
    <variation>D</variation>
    <location>
        <position position="409"/>
    </location>
</feature>
<feature type="sequence variant" id="VAR_021720" description="In OCA1A." evidence="14">
    <original>A</original>
    <variation>S</variation>
    <location>
        <position position="416"/>
    </location>
</feature>
<feature type="sequence variant" id="VAR_021721" description="In OCA1A." evidence="14">
    <original>P</original>
    <variation>H</variation>
    <location>
        <position position="417"/>
    </location>
</feature>
<feature type="sequence variant" id="VAR_007690" description="In OCA1A; dbSNP:rs61754392." evidence="7 14 22 30">
    <original>G</original>
    <variation>R</variation>
    <location>
        <position position="419"/>
    </location>
</feature>
<feature type="sequence variant" id="VAR_007691" description="In OCA1A and OCA1B; temperature sensitive variant; dbSNP:rs61754393." evidence="7 14 20">
    <original>R</original>
    <variation>Q</variation>
    <location>
        <position position="422"/>
    </location>
</feature>
<feature type="sequence variant" id="VAR_021722" description="In OCA1A; dbSNP:rs758747581." evidence="14">
    <original>S</original>
    <variation>F</variation>
    <location>
        <position position="424"/>
    </location>
</feature>
<feature type="sequence variant" id="VAR_021723" description="In OCA1A; dbSNP:rs1362285246." evidence="14">
    <original>M</original>
    <variation>K</variation>
    <location>
        <position position="426"/>
    </location>
</feature>
<feature type="sequence variant" id="VAR_021724" description="In OCA1A." evidence="14">
    <original>V</original>
    <variation>G</variation>
    <location>
        <position position="427"/>
    </location>
</feature>
<feature type="sequence variant" id="VAR_007938" description="In OCA1A; dbSNP:rs281865325." evidence="30">
    <original>P</original>
    <variation>L</variation>
    <location>
        <position position="431"/>
    </location>
</feature>
<feature type="sequence variant" id="VAR_021725" description="In OCA1A." evidence="14">
    <original>R</original>
    <variation>I</variation>
    <location>
        <position position="434"/>
    </location>
</feature>
<feature type="sequence variant" id="VAR_021726" description="In OCA1A." evidence="14">
    <original>N</original>
    <variation>D</variation>
    <location>
        <position position="435"/>
    </location>
</feature>
<feature type="sequence variant" id="VAR_021727" description="In OCA1A; dbSNP:rs281865327." evidence="7">
    <original>F</original>
    <variation>V</variation>
    <location>
        <position position="439"/>
    </location>
</feature>
<feature type="sequence variant" id="VAR_021728" description="In OCA1A." evidence="14">
    <original>D</original>
    <variation>G</variation>
    <location>
        <position position="444"/>
    </location>
</feature>
<feature type="sequence variant" id="VAR_007692" description="In OCA1A; dbSNP:rs104894317." evidence="7 10 15">
    <original>G</original>
    <variation>S</variation>
    <location>
        <position position="446"/>
    </location>
</feature>
<feature type="sequence variant" id="VAR_007693" description="In OCA1A; dbSNP:rs104894318." evidence="7 14 15">
    <original>D</original>
    <variation>N</variation>
    <location>
        <position position="448"/>
    </location>
</feature>
<feature type="sequence variant" id="VAR_072598" description="In OCA1A; dbSNP:rs1050708792." evidence="26">
    <original>A</original>
    <variation>D</variation>
    <location>
        <position position="490"/>
    </location>
</feature>
<feature type="sequence conflict" description="In Ref. 2; AAA61241." evidence="39" ref="2">
    <original>DRSP</original>
    <variation>TGV</variation>
    <location>
        <begin position="42"/>
        <end position="45"/>
    </location>
</feature>
<feature type="sequence conflict" description="In Ref. 4; CAA68756." evidence="39" ref="4">
    <original>M</original>
    <variation>I</variation>
    <location>
        <position position="179"/>
    </location>
</feature>
<feature type="sequence conflict" description="In Ref. 2; AAA61241." evidence="39" ref="2">
    <original>TMSQVQ</original>
    <variation>HVPGT</variation>
    <location>
        <begin position="373"/>
        <end position="378"/>
    </location>
</feature>
<feature type="sequence conflict" description="In Ref. 2; AAA61241/AAA61244." evidence="39" ref="2">
    <original>L</original>
    <variation>P</variation>
    <location>
        <position position="495"/>
    </location>
</feature>
<feature type="sequence conflict" description="In Ref. 2." evidence="39" ref="2">
    <original>DYHS</original>
    <variation>GLPQ</variation>
    <location>
        <begin position="520"/>
        <end position="523"/>
    </location>
</feature>
<feature type="sequence conflict" description="In Ref. 2." evidence="39" ref="2">
    <original>YQSH</original>
    <variation>VSEPFIKGLGNRVGPKSPDLTLTQSNVQVPENICWYFL</variation>
    <location>
        <begin position="525"/>
        <end position="528"/>
    </location>
</feature>
<reference key="1">
    <citation type="journal article" date="1991" name="Genomics">
        <title>Organization and nucleotide sequences of the human tyrosinase gene and a truncated tyrosinase-related segment.</title>
        <authorList>
            <person name="Giebel L.B."/>
            <person name="Strunk K.M."/>
            <person name="Spritz R.A."/>
        </authorList>
    </citation>
    <scope>NUCLEOTIDE SEQUENCE [GENOMIC DNA] (ISOFORM 1)</scope>
</reference>
<reference key="2">
    <citation type="journal article" date="1987" name="Proc. Natl. Acad. Sci. U.S.A.">
        <title>Isolation and sequence of a cDNA clone for human tyrosinase that maps at the mouse c-albino locus.</title>
        <authorList>
            <person name="Kwon B.S."/>
            <person name="Haq A.K."/>
            <person name="Pomerantz S.H."/>
            <person name="Halaban R."/>
        </authorList>
    </citation>
    <scope>NUCLEOTIDE SEQUENCE [MRNA] (ISOFORM 1)</scope>
</reference>
<reference key="3">
    <citation type="journal article" date="1988" name="Proc. Natl. Acad. Sci. U.S.A.">
        <authorList>
            <person name="Kwon B.S."/>
            <person name="Haq A.K."/>
            <person name="Pomerantz S.H."/>
            <person name="Halaban R."/>
        </authorList>
    </citation>
    <scope>ERRATUM OF PUBMED:2823263</scope>
    <scope>SEQUENCE REVISION TO 384-398</scope>
</reference>
<reference key="4">
    <citation type="journal article" date="1989" name="J. Exp. Med.">
        <title>Induction of pigmentation in mouse fibroblasts by expression of human tyrosinase cDNA.</title>
        <authorList>
            <person name="Bouchard B."/>
            <person name="Fuller B.B."/>
            <person name="Vijayasaradhi S."/>
            <person name="Houghton A.N."/>
        </authorList>
    </citation>
    <scope>NUCLEOTIDE SEQUENCE [MRNA] (ISOFORM 1)</scope>
    <source>
        <tissue>Melanoma</tissue>
    </source>
</reference>
<reference key="5">
    <citation type="journal article" date="1991" name="Proc. Natl. Acad. Sci. U.S.A.">
        <title>A single base insertion in the putative transmembrane domain of the tyrosinase gene as a cause for tyrosinase-negative oculocutaneous albinism.</title>
        <authorList>
            <person name="Chintamaneni C.D."/>
            <person name="Halaban R."/>
            <person name="Kobayashi Y."/>
            <person name="Witkop C.J."/>
            <person name="Kwon B.S."/>
        </authorList>
    </citation>
    <scope>NUCLEOTIDE SEQUENCE [MRNA] (ISOFORM 1)</scope>
</reference>
<reference key="6">
    <citation type="journal article" date="1993" name="J. Exp. Med.">
        <title>The tyrosinase gene codes for an antigen recognized by autologous cytolytic T lymphocytes on HLA-A2 melanomas.</title>
        <authorList>
            <person name="Brichard V."/>
            <person name="van Pel A."/>
            <person name="Woelfel T."/>
            <person name="Woelfel C."/>
            <person name="de Plaen E."/>
            <person name="Lethe B.G."/>
            <person name="Coulie P."/>
            <person name="Boon T."/>
        </authorList>
    </citation>
    <scope>NUCLEOTIDE SEQUENCE (ISOFORM 1)</scope>
    <source>
        <tissue>Melanoma</tissue>
        <tissue>T-cell</tissue>
    </source>
</reference>
<reference key="7">
    <citation type="journal article" date="2000" name="Pigment Cell Res.">
        <title>The tyrosinase gene in gorillas and the albinism of 'Snowflake'.</title>
        <authorList>
            <person name="Martinez-Arias R."/>
            <person name="Comas D."/>
            <person name="Andres A."/>
            <person name="Abello M.-T."/>
            <person name="Domingo-Roura X."/>
            <person name="Bertranpetit J."/>
        </authorList>
    </citation>
    <scope>NUCLEOTIDE SEQUENCE [GENOMIC DNA] (ISOFORM 1)</scope>
    <scope>VARIANT TYR-192</scope>
</reference>
<reference key="8">
    <citation type="journal article" date="2004" name="Genome Res.">
        <title>The status, quality, and expansion of the NIH full-length cDNA project: the Mammalian Gene Collection (MGC).</title>
        <authorList>
            <consortium name="The MGC Project Team"/>
        </authorList>
    </citation>
    <scope>NUCLEOTIDE SEQUENCE [LARGE SCALE MRNA] (ISOFORM 2)</scope>
    <source>
        <tissue>Skin</tissue>
    </source>
</reference>
<reference key="9">
    <citation type="journal article" date="1989" name="Biochim. Biophys. Acta">
        <title>Characteristic sequences in the upstream region of the human tyrosinase gene.</title>
        <authorList>
            <person name="Kikuchi H."/>
            <person name="Miura H."/>
            <person name="Yamamoto H."/>
            <person name="Takeuchi T."/>
            <person name="Dei T."/>
            <person name="Watanabe M."/>
        </authorList>
    </citation>
    <scope>NUCLEOTIDE SEQUENCE [GENOMIC DNA] OF 1-272</scope>
    <source>
        <tissue>Liver</tissue>
    </source>
</reference>
<reference key="10">
    <citation type="journal article" date="1989" name="Biochem. Biophys. Res. Commun.">
        <title>Functional analysis of the cDNA encoding human tyrosinase precursor.</title>
        <authorList>
            <person name="Takeda A."/>
            <person name="Tomita Y."/>
            <person name="Okinaga S."/>
            <person name="Tagami H."/>
            <person name="Shibahara S."/>
        </authorList>
    </citation>
    <scope>NUCLEOTIDE SEQUENCE [MRNA] OF 1-32</scope>
</reference>
<reference key="11">
    <citation type="journal article" date="2001" name="Nature">
        <title>Molecular phylogenetics and the origins of placental mammals.</title>
        <authorList>
            <person name="Murphy W.J."/>
            <person name="Eizirik E."/>
            <person name="Johnson W.E."/>
            <person name="Zhang Y.-P."/>
            <person name="Ryder O.A."/>
            <person name="O'Brien S.J."/>
        </authorList>
    </citation>
    <scope>NUCLEOTIDE SEQUENCE [GENOMIC DNA] OF 54-195</scope>
    <scope>VARIANT TYR-192</scope>
</reference>
<reference key="12">
    <citation type="journal article" date="1993" name="Hum. Mutat.">
        <title>Molecular basis of type I (tyrosinase-related) oculocutaneous albinism: mutations and polymorphisms of the human tyrosinase gene.</title>
        <authorList>
            <person name="Oetting W.S."/>
            <person name="King R.A."/>
        </authorList>
    </citation>
    <scope>REVIEW ON OCA VARIANTS</scope>
</reference>
<reference key="13">
    <citation type="journal article" date="1999" name="Hum. Mutat.">
        <title>Molecular basis of albinism: mutations and polymorphisms of pigmentation genes associated with albinism.</title>
        <authorList>
            <person name="Oetting W.S."/>
            <person name="King R.A."/>
        </authorList>
    </citation>
    <scope>REVIEW ON OCA1 VARIANTS</scope>
</reference>
<reference key="14">
    <citation type="journal article" date="2003" name="J. Proteome Res.">
        <title>Proteomic analysis of early melanosomes: identification of novel melanosomal proteins.</title>
        <authorList>
            <person name="Basrur V."/>
            <person name="Yang F."/>
            <person name="Kushimoto T."/>
            <person name="Higashimoto Y."/>
            <person name="Yasumoto K."/>
            <person name="Valencia J."/>
            <person name="Muller J."/>
            <person name="Vieira W.D."/>
            <person name="Watabe H."/>
            <person name="Shabanowitz J."/>
            <person name="Hearing V.J."/>
            <person name="Hunt D.F."/>
            <person name="Appella E."/>
        </authorList>
    </citation>
    <scope>SUBCELLULAR LOCATION [LARGE SCALE ANALYSIS]</scope>
    <source>
        <tissue>Melanoma</tissue>
    </source>
</reference>
<reference key="15">
    <citation type="journal article" date="2006" name="J. Proteome Res.">
        <title>Proteomic and bioinformatic characterization of the biogenesis and function of melanosomes.</title>
        <authorList>
            <person name="Chi A."/>
            <person name="Valencia J.C."/>
            <person name="Hu Z.-Z."/>
            <person name="Watabe H."/>
            <person name="Yamaguchi H."/>
            <person name="Mangini N.J."/>
            <person name="Huang H."/>
            <person name="Canfield V.A."/>
            <person name="Cheng K.C."/>
            <person name="Yang F."/>
            <person name="Abe R."/>
            <person name="Yamagishi S."/>
            <person name="Shabanowitz J."/>
            <person name="Hearing V.J."/>
            <person name="Wu C."/>
            <person name="Appella E."/>
            <person name="Hunt D.F."/>
        </authorList>
    </citation>
    <scope>SUBCELLULAR LOCATION [LARGE SCALE ANALYSIS]</scope>
    <source>
        <tissue>Melanoma</tissue>
    </source>
</reference>
<reference key="16">
    <citation type="journal article" date="2017" name="Angew. Chem. Int. Ed. Engl.">
        <title>Structure of Human Tyrosinase Related Protein1 Reveals a Binuclear Zinc Active Site Important for Melanogenesis.</title>
        <authorList>
            <person name="Lai X."/>
            <person name="Wichers H.J."/>
            <person name="Soler-Lopez M."/>
            <person name="Dijkstra B.W."/>
        </authorList>
    </citation>
    <scope>FUNCTION</scope>
    <scope>CATALYTIC ACTIVITY</scope>
</reference>
<reference key="17">
    <citation type="journal article" date="2018" name="J. Invest. Dermatol.">
        <title>Melanocytes Sense Blue Light and Regulate Pigmentation through Opsin-3.</title>
        <authorList>
            <person name="Regazzetti C."/>
            <person name="Sormani L."/>
            <person name="Debayle D."/>
            <person name="Bernerd F."/>
            <person name="Tulic M.K."/>
            <person name="De Donatis G.M."/>
            <person name="Chignon-Sicard B."/>
            <person name="Rocchi S."/>
            <person name="Passeron T."/>
        </authorList>
    </citation>
    <scope>INTERACTION WITH DCT</scope>
</reference>
<reference key="18">
    <citation type="journal article" date="1990" name="N. Engl. J. Med.">
        <title>Detection of mutations in the tyrosinase gene in a patient with type IA oculocutaneous albinism.</title>
        <authorList>
            <person name="Spritz R.A."/>
            <person name="Strunk K.M."/>
            <person name="Giebel L.B."/>
            <person name="King R.A."/>
        </authorList>
    </citation>
    <scope>VARIANTS OCA1A LYS-373 AND ASN-383</scope>
    <scope>VARIANTS TYR-192 AND GLN-402</scope>
</reference>
<reference key="19">
    <citation type="journal article" date="1990" name="Proc. Natl. Acad. Sci. U.S.A.">
        <title>A frequent tyrosinase gene mutation in classic, tyrosinase-negative (type IA) oculocutaneous albinism.</title>
        <authorList>
            <person name="Giebel L.B."/>
            <person name="Strunk K.M."/>
            <person name="King R.A."/>
            <person name="Hanifin J.M."/>
            <person name="Spritz R.A."/>
        </authorList>
    </citation>
    <scope>VARIANT OCA1A LEU-81</scope>
</reference>
<reference key="20">
    <citation type="journal article" date="1991" name="Am. J. Hum. Genet.">
        <title>Tyrosinase gene mutations associated with type IB ('yellow') oculocutaneous albinism.</title>
        <authorList>
            <person name="Giebel L.B."/>
            <person name="Tripathi R.K."/>
            <person name="Strunk K.M."/>
            <person name="Hanifin J.M."/>
            <person name="Jackson C.E."/>
            <person name="King R.A."/>
            <person name="Spritz R.A."/>
        </authorList>
    </citation>
    <scope>VARIANTS OCA1B PHE-275 AND LEU-406</scope>
</reference>
<reference key="21">
    <citation type="journal article" date="1991" name="Am. J. Hum. Genet.">
        <authorList>
            <person name="Giebel L.B."/>
            <person name="Tripathi R.K."/>
            <person name="Strunk K.M."/>
            <person name="Hanifin J.M."/>
            <person name="Jackson C.E."/>
            <person name="King R.A."/>
            <person name="Spritz R.A."/>
        </authorList>
    </citation>
    <scope>ERRATUM OF PUBMED:1903591</scope>
</reference>
<reference key="22">
    <citation type="journal article" date="1992" name="Am. J. Med. Genet.">
        <title>Tyrosinase gene mutations in type I (tyrosinase-deficient) oculocutaneous albinism define two clusters of missense substitutions.</title>
        <authorList>
            <person name="Tripathi R.K."/>
            <person name="Strunk K.M."/>
            <person name="Giebel L.B."/>
            <person name="Weleber R.G."/>
            <person name="Spritz R.A."/>
        </authorList>
    </citation>
    <scope>VARIANTS OCA1A SER-21; TRP-217; HIS-299; LYS-382; SER-403; SER-446 AND ASN-448</scope>
</reference>
<reference key="23">
    <citation type="journal article" date="1991" name="Am. J. Hum. Genet.">
        <title>Homozygous tyrosinase gene mutation in an American black with tyrosinase-negative (type IA) oculocutaneous albinism.</title>
        <authorList>
            <person name="Spritz R.A."/>
            <person name="Strunk K.M."/>
            <person name="Hsieh C.-L."/>
            <person name="Sekhon G.S."/>
            <person name="Francke U."/>
        </authorList>
    </citation>
    <scope>VARIANT OCA1A ARG-89</scope>
</reference>
<reference key="24">
    <citation type="journal article" date="1991" name="J. Clin. Invest.">
        <title>A tyrosinase gene missense mutation in temperature-sensitive type I oculocutaneous albinism. A human homologue to the Siamese cat and the Himalayan mouse.</title>
        <authorList>
            <person name="Giebel L.B."/>
            <person name="Tripathi R.K."/>
            <person name="King R.A."/>
            <person name="Spritz R.A."/>
        </authorList>
    </citation>
    <scope>VARIANT OCA1B GLN-422</scope>
</reference>
<reference key="25">
    <citation type="journal article" date="1991" name="Mol. Biol. Med.">
        <title>Non-random distribution of missense mutations within the human tyrosinase gene in type I (tyrosinase-related) oculocutaneous albinism.</title>
        <authorList>
            <person name="King R.A."/>
            <person name="Mentink M.M."/>
            <person name="Oetting W.S."/>
        </authorList>
    </citation>
    <scope>VARIANTS OCA1A GLY-42; TYR-55; THR-206 AND ARG-419</scope>
</reference>
<reference key="26">
    <citation type="journal article" date="1992" name="Hum. Genet.">
        <title>Molecular analysis of type I-A (tyrosinase negative) oculocutaneous albinism.</title>
        <authorList>
            <person name="Oetting W.S."/>
            <person name="King R.A."/>
        </authorList>
    </citation>
    <scope>VARIANTS OCA1A ILE-176 AND GLN-217</scope>
</reference>
<reference key="27">
    <citation type="journal article" date="1993" name="Am. J. Hum. Genet.">
        <title>A frequent tyrosinase gene mutation associated with type I-A (tyrosinase-negative) oculocutaneous albinism in Puerto Rico.</title>
        <authorList>
            <person name="Oetting W.S."/>
            <person name="Witkop C.J. Jr."/>
            <person name="Brown S.A."/>
            <person name="Colomer R."/>
            <person name="Fryer J.P."/>
            <person name="Bloom K.E."/>
            <person name="King R.A."/>
        </authorList>
    </citation>
    <scope>VARIANTS OCA1A GLN-19; MET-216 AND THR-371</scope>
</reference>
<reference key="28">
    <citation type="journal article" date="1993" name="Am. J. Hum. Genet.">
        <title>Mutations of the tyrosinase gene in Indo-Pakistani patients with type I (tyrosinase-deficient) oculocutaneous albinism (OCA).</title>
        <authorList>
            <person name="Tripathi R.K."/>
            <person name="Bundey S."/>
            <person name="Musarella M.A."/>
            <person name="Droetto S."/>
            <person name="Strunk K.M."/>
            <person name="Holmes S.A."/>
            <person name="Spritz R.A."/>
        </authorList>
    </citation>
    <scope>VARIANTS OCA1A GLN-328; ARG-419 AND LEU-431</scope>
</reference>
<reference key="29">
    <citation type="journal article" date="1994" name="Am. J. Hum. Genet.">
        <title>Mutations of the tyrosinase gene in patients with oculocutaneous albinism from various ethnic groups in Israel.</title>
        <authorList>
            <person name="Gershoni-Baruch R."/>
            <person name="Rosenmann A."/>
            <person name="Droetto S."/>
            <person name="Holmes S.A."/>
            <person name="Tripathi R.K."/>
            <person name="Spritz R.A."/>
        </authorList>
    </citation>
    <scope>VARIANTS OCA1A ASP-47; ARG-217 DEL; HIS-299 AND LYS-373</scope>
    <scope>VARIANTS OCA1B SER-152 AND LYS-294</scope>
</reference>
<reference key="30">
    <citation type="journal article" date="1994" name="Clin. Chim. Acta">
        <title>Initiation codon mutation of the tyrosinase gene as a cause of human albinism.</title>
        <authorList>
            <person name="Breimer L.H."/>
            <person name="Winder A.F."/>
            <person name="Jay B."/>
            <person name="Jay M."/>
        </authorList>
    </citation>
    <scope>VARIANTS OCA1A TYR-367; THR-370 AND LYS-373</scope>
    <scope>VARIANT GLN-402</scope>
</reference>
<reference key="31">
    <citation type="journal article" date="1994" name="Electrophoresis">
        <title>Analysis of tyrosinase gene mutations using direct automated infrared fluorescence DNA sequencing of amplified exons.</title>
        <authorList>
            <person name="Oetting W.S."/>
            <person name="Fryer J.P."/>
            <person name="Oofuji Y."/>
            <person name="Middendorf L.R."/>
            <person name="Brumbaugh J.A."/>
            <person name="Summers C.G."/>
            <person name="King R.A."/>
        </authorList>
    </citation>
    <scope>VARIANTS OCA1A SER-288; GLU-346; GLU-355 AND GLY-402</scope>
</reference>
<reference key="32">
    <citation type="journal article" date="1996" name="Am. J. Ophthalmol.">
        <title>Diagnosis of oculocutaneous albinism with molecular analysis.</title>
        <authorList>
            <person name="Summers C.G."/>
            <person name="Oetting W.S."/>
            <person name="King R.A."/>
        </authorList>
    </citation>
    <scope>VARIANTS OCA1A ARG-361 AND TYR-371</scope>
</reference>
<reference key="33">
    <citation type="journal article" date="1997" name="Hum. Mol. Genet.">
        <title>Apparent digenic inheritance of Waardenburg syndrome type 2 (WS2) and autosomal recessive ocular albinism (AROA).</title>
        <authorList>
            <person name="Morell R."/>
            <person name="Spritz R.A."/>
            <person name="Ho L."/>
            <person name="Pierpont J."/>
            <person name="Guo W."/>
            <person name="Friedman T.B."/>
            <person name="Asher J.H. Jr."/>
        </authorList>
    </citation>
    <scope>VARIANT GLN-402</scope>
</reference>
<reference key="34">
    <citation type="journal article" date="1997" name="Hum. Mutat.">
        <title>Novel mutations of the tyrosinase (TYR) gene in type I oculocutaneous albinism (OCA1).</title>
        <authorList>
            <person name="Spritz R.A."/>
            <person name="Oh J."/>
            <person name="Fukai K."/>
            <person name="Holmes S.A."/>
            <person name="Ho L."/>
            <person name="Chitayat D."/>
            <person name="France T.D."/>
            <person name="Musarella M.A."/>
            <person name="Orlow S.J."/>
            <person name="Schnur R.E."/>
            <person name="Weleber R.G."/>
            <person name="Levin A.V."/>
        </authorList>
    </citation>
    <scope>VARIANTS OCA1A ARG-80; GLY-217; ARG-253; ASP-390 AND ASN-395</scope>
    <scope>VARIANTS OCA1B ALA-325 AND PRO-380</scope>
</reference>
<reference key="35">
    <citation type="journal article" date="1998" name="Hum. Mutat.">
        <title>Mutations of the human tyrosinase gene associated with tyrosinase related oculocutaneous albinism (OCA1).</title>
        <authorList>
            <person name="Oetting W.S."/>
            <person name="Fryer J.P."/>
            <person name="King R.A."/>
        </authorList>
    </citation>
    <scope>VARIANTS OCA1A AND OCA1B</scope>
    <scope>VARIANT OCA1A ILE-52</scope>
</reference>
<reference key="36">
    <citation type="journal article" date="1999" name="Hum. Mutat.">
        <authorList>
            <person name="Oetting W.S."/>
            <person name="Fryer J.P."/>
            <person name="King R.A."/>
        </authorList>
    </citation>
    <scope>ERRATUM OF PUBMED:10671066</scope>
</reference>
<reference key="37">
    <citation type="journal article" date="1999" name="Hum. Genet.">
        <title>Novel and recurrent mutations in the tyrosinase gene and the P gene in the German albino population.</title>
        <authorList>
            <person name="Passmore L.A."/>
            <person name="Kaesmann-Kellner B."/>
            <person name="Weber B.H.F."/>
        </authorList>
    </citation>
    <scope>VARIANTS OCA1A TYR-36; GLN-77; TRP-77; LEU-81; ARG-97; GLN-217; TRP-217; SER-236; CYS-272; ARG-289; GLY-294; LYS-294; PRO-355; TYR-371; LYS-373; LEU-406; ARG-419; GLN-422; VAL-439; SER-446 AND ASN-448</scope>
    <scope>VARIANT OCA1B SER-403</scope>
    <scope>VARIANTS TYR-192 AND GLN-402</scope>
</reference>
<reference key="38">
    <citation type="journal article" date="2001" name="Hum. Genet.">
        <authorList>
            <person name="Passmore L.A."/>
            <person name="Kaesmann-Kellner B."/>
            <person name="Weber B.H.F."/>
        </authorList>
    </citation>
    <scope>ERRATUM OF PUBMED:10987646</scope>
</reference>
<reference key="39">
    <citation type="journal article" date="1999" name="Hum. Mutat.">
        <title>Insertion/deletion mutations of type I oculocutaneous albinism in Chinese patients from Taiwan.</title>
        <authorList>
            <person name="Tsai C.-H."/>
            <person name="Tsai F.-J."/>
            <person name="Wu J.-Y."/>
            <person name="Lin S.-P."/>
            <person name="Chang J.-G."/>
            <person name="Yang C.-F."/>
            <person name="Lee C.-C."/>
        </authorList>
    </citation>
    <scope>VARIANTS OCA1A TYR-55; ARG-77 INS; GLY-289; HIS-299; SER-299 AND LEU-400</scope>
</reference>
<reference key="40">
    <citation type="journal article" date="2001" name="Hum. Mutat.">
        <title>Mutation analysis of the tyrosinase gene in oculocutaneous albinism.</title>
        <authorList>
            <person name="Camand O."/>
            <person name="Marchant D."/>
            <person name="Boutboul S."/>
            <person name="Pequignot M."/>
            <person name="Odent S."/>
            <person name="Dollfus H."/>
            <person name="Sutherland J."/>
            <person name="Levin A."/>
            <person name="Menasche M."/>
            <person name="Marsac C."/>
            <person name="Dufier J.-L."/>
            <person name="Heon E."/>
            <person name="Abitbol M."/>
        </authorList>
    </citation>
    <scope>VARIANTS OCA1A ASP-47; GLN-77; ARG-109; THR-205; TYR-256; PHE-275; LYS-294; GLY-339; PRO-355; LYS-373; ASN-383 AND SER-446</scope>
</reference>
<reference key="41">
    <citation type="journal article" date="2002" name="J. Dermatol. Sci.">
        <title>A novel mutation of the tyrosinase gene causing oculocutaneous albinism type 1 (OCA1).</title>
        <authorList>
            <person name="Nakamura E."/>
            <person name="Miyamura Y."/>
            <person name="Matsunaga J."/>
            <person name="Kano Y."/>
            <person name="Dakeishi-Hara M."/>
            <person name="Tanita M."/>
            <person name="Kono M."/>
            <person name="Tomita Y."/>
        </authorList>
    </citation>
    <scope>VARIANT OCA1A TRP-239</scope>
</reference>
<reference key="42">
    <citation type="journal article" date="2004" name="Hum. Mutat.">
        <title>Detection of 53 novel DNA variations within the tyrosinase gene and accumulation of mutations in 17 patients with albinism.</title>
        <authorList>
            <person name="Opitz S."/>
            <person name="Kaesmann-Kellner B."/>
            <person name="Kaufmann M."/>
            <person name="Schwinger E."/>
            <person name="Zuehlke C."/>
        </authorList>
    </citation>
    <scope>VARIANTS OCA1A ARG-44; GLY-44; ASP-47; VAL-47; HIS-68; GLN-77; LEU-79; LEU-81; SER-155; PHE-177; LEU-179; ASN-180; ASN-199; SER-201; SER-217; LEU-236; VAL-240; THR-243; TYR-256; ARG-289; GLU-318; PRO-329; THR-332; GLY-345; PRO-355; LYS-373; LYS-378; ASN-383; PHE-393; ARG-395; VAL-398; ALA-398; LEU-402; SER-403; ASN-404; LEU-405; LEU-406; HIS-408; ASP-409; SER-416; HIS-417; ARG-419; GLN-422; PHE-424; LYS-426; GLY-427; ILE-434; ASP-435; GLY-444 AND ASN-448</scope>
    <scope>VARIANTS TYR-192 AND GLN-402</scope>
</reference>
<reference key="43">
    <citation type="journal article" date="2007" name="Am. J. Hum. Genet.">
        <title>A genomewide association study of skin pigmentation in a South Asian population.</title>
        <authorList>
            <person name="Stokowski R.P."/>
            <person name="Pant P.V.K."/>
            <person name="Dadd T."/>
            <person name="Fereday A."/>
            <person name="Hinds D.A."/>
            <person name="Jarman C."/>
            <person name="Filsell W."/>
            <person name="Ginger R.S."/>
            <person name="Green M.R."/>
            <person name="van der Ouderaa F.J."/>
            <person name="Cox D.R."/>
        </authorList>
    </citation>
    <scope>VARIANT TYR-192</scope>
    <scope>ASSOCIATION WITH SHEP3</scope>
</reference>
<reference key="44">
    <citation type="journal article" date="2007" name="Nat. Genet.">
        <title>Genetic determinants of hair, eye and skin pigmentation in Europeans.</title>
        <authorList>
            <person name="Sulem P."/>
            <person name="Gudbjartsson D.F."/>
            <person name="Stacey S.N."/>
            <person name="Helgason A."/>
            <person name="Rafnar T."/>
            <person name="Magnusson K.P."/>
            <person name="Manolescu A."/>
            <person name="Karason A."/>
            <person name="Palsson A."/>
            <person name="Thorleifsson G."/>
            <person name="Jakobsdottir M."/>
            <person name="Steinberg S."/>
            <person name="Palsson S."/>
            <person name="Jonasson F."/>
            <person name="Sigurgeirsson B."/>
            <person name="Thorisdottir K."/>
            <person name="Ragnarsson R."/>
            <person name="Benediktsdottir K.R."/>
            <person name="Aben K.K."/>
            <person name="Kiemeney L.A."/>
            <person name="Olafsson J.H."/>
            <person name="Gulcher J."/>
            <person name="Kong A."/>
            <person name="Thorsteinsdottir U."/>
            <person name="Stefansson K."/>
        </authorList>
    </citation>
    <scope>VARIANT TYR-192</scope>
    <scope>ASSOCIATION WITH SHEP3</scope>
</reference>
<reference key="45">
    <citation type="journal article" date="2012" name="Am. J. Hum. Genet.">
        <title>A population-based study of autosomal-recessive disease-causing mutations in a founder population.</title>
        <authorList>
            <person name="Chong J.X."/>
            <person name="Ouwenga R."/>
            <person name="Anderson R.L."/>
            <person name="Waggoner D.J."/>
            <person name="Ober C."/>
        </authorList>
    </citation>
    <scope>VARIANT OCA1A TYR-91</scope>
</reference>
<reference key="46">
    <citation type="journal article" date="2013" name="Hum. Mutat.">
        <title>DNA variations in oculocutaneous albinism: an updated mutation list and current outstanding issues in molecular diagnostics.</title>
        <authorList>
            <person name="Simeonov D.R."/>
            <person name="Wang X."/>
            <person name="Wang C."/>
            <person name="Sergeev Y."/>
            <person name="Dolinska M."/>
            <person name="Bower M."/>
            <person name="Fischer R."/>
            <person name="Winer D."/>
            <person name="Dubrovsky G."/>
            <person name="Balog J.Z."/>
            <person name="Huizing M."/>
            <person name="Hart R."/>
            <person name="Zein W.M."/>
            <person name="Gahl W.A."/>
            <person name="Brooks B.P."/>
            <person name="Adams D.R."/>
        </authorList>
    </citation>
    <scope>VARIANTS OCA1A LEU-50; TRP-77; PHE-275; TRP-298; VAL-355; HIS-364; LYS-373; ALA-384 AND ASP-490</scope>
</reference>
<reference key="47">
    <citation type="journal article" date="2014" name="Clin. Exp. Dermatol.">
        <title>Identification of a novel mutation (p.Ile198Thr) in gene TYR in a Pakistani family with nonsyndromic oculocutaneous albinism.</title>
        <authorList>
            <person name="Shah S.A."/>
            <person name="Din S.U."/>
            <person name="Raheem N."/>
            <person name="Daud S."/>
            <person name="Mubeen J."/>
            <person name="Nadeem A."/>
            <person name="Tayyab M."/>
            <person name="Baloch D.M."/>
            <person name="Babar M.E."/>
            <person name="Ahmad J."/>
        </authorList>
    </citation>
    <scope>VARIANT OCA1A THR-198</scope>
</reference>
<accession>P14679</accession>
<accession>Q15675</accession>
<accession>Q15676</accession>
<accession>Q15680</accession>
<accession>Q8TAK4</accession>
<accession>Q9BYY0</accession>
<accession>Q9BZX1</accession>